<protein>
    <recommendedName>
        <fullName>Cytochrome c oxidase subunit 2</fullName>
        <ecNumber>7.1.1.9</ecNumber>
    </recommendedName>
    <alternativeName>
        <fullName>Cytochrome c oxidase polypeptide II</fullName>
    </alternativeName>
</protein>
<reference key="1">
    <citation type="journal article" date="2005" name="Mol. Phylogenet. Evol.">
        <title>Multigene phylogeny of the Old World mice, Murinae, reveals distinct geographic lineages and the declining utility of mitochondrial genes compared to nuclear genes.</title>
        <authorList>
            <person name="Steppan S.J."/>
            <person name="Adkins R.M."/>
            <person name="Spinks P.Q."/>
            <person name="Hale C."/>
        </authorList>
    </citation>
    <scope>NUCLEOTIDE SEQUENCE [GENOMIC DNA]</scope>
</reference>
<organism>
    <name type="scientific">Hybomys univittatus</name>
    <name type="common">Peter's striped mouse</name>
    <name type="synonym">Mus univittatus</name>
    <dbReference type="NCBI Taxonomy" id="71162"/>
    <lineage>
        <taxon>Eukaryota</taxon>
        <taxon>Metazoa</taxon>
        <taxon>Chordata</taxon>
        <taxon>Craniata</taxon>
        <taxon>Vertebrata</taxon>
        <taxon>Euteleostomi</taxon>
        <taxon>Mammalia</taxon>
        <taxon>Eutheria</taxon>
        <taxon>Euarchontoglires</taxon>
        <taxon>Glires</taxon>
        <taxon>Rodentia</taxon>
        <taxon>Myomorpha</taxon>
        <taxon>Muroidea</taxon>
        <taxon>Muridae</taxon>
        <taxon>Murinae</taxon>
        <taxon>Hybomys</taxon>
    </lineage>
</organism>
<sequence length="227" mass="25901">MAYPFQLGLQDATSPIMEELTNFHDHTLMIVFLISTLVLYIISLMLTTKLTHTSTMDAQEVETIWTILPAVILILIALPSLRILYMMDEINNPALTVKTMGHQWYWSYEYTDYEDLCFDSYMIPTNDLKPGELRLLEVDNRVVLPMELPIRMLISSEDVLHSWAVPSLGLKTDAIPGRLNQATVSSNRPGLFYGQCSEICGSNHSFMPIVLEMVPLKYFEDWSASMI</sequence>
<gene>
    <name type="primary">MT-CO2</name>
    <name type="synonym">COII</name>
    <name type="synonym">COX2</name>
    <name type="synonym">COXII</name>
    <name type="synonym">MTCO2</name>
</gene>
<keyword id="KW-0186">Copper</keyword>
<keyword id="KW-0249">Electron transport</keyword>
<keyword id="KW-0460">Magnesium</keyword>
<keyword id="KW-0472">Membrane</keyword>
<keyword id="KW-0479">Metal-binding</keyword>
<keyword id="KW-0496">Mitochondrion</keyword>
<keyword id="KW-0999">Mitochondrion inner membrane</keyword>
<keyword id="KW-0597">Phosphoprotein</keyword>
<keyword id="KW-0679">Respiratory chain</keyword>
<keyword id="KW-1278">Translocase</keyword>
<keyword id="KW-0812">Transmembrane</keyword>
<keyword id="KW-1133">Transmembrane helix</keyword>
<keyword id="KW-0813">Transport</keyword>
<dbReference type="EC" id="7.1.1.9"/>
<dbReference type="EMBL" id="DQ019099">
    <property type="protein sequence ID" value="ABA28389.1"/>
    <property type="molecule type" value="Genomic_DNA"/>
</dbReference>
<dbReference type="SMR" id="Q38S11"/>
<dbReference type="GO" id="GO:0005743">
    <property type="term" value="C:mitochondrial inner membrane"/>
    <property type="evidence" value="ECO:0007669"/>
    <property type="project" value="UniProtKB-SubCell"/>
</dbReference>
<dbReference type="GO" id="GO:0045277">
    <property type="term" value="C:respiratory chain complex IV"/>
    <property type="evidence" value="ECO:0000250"/>
    <property type="project" value="UniProtKB"/>
</dbReference>
<dbReference type="GO" id="GO:0005507">
    <property type="term" value="F:copper ion binding"/>
    <property type="evidence" value="ECO:0007669"/>
    <property type="project" value="InterPro"/>
</dbReference>
<dbReference type="GO" id="GO:0004129">
    <property type="term" value="F:cytochrome-c oxidase activity"/>
    <property type="evidence" value="ECO:0007669"/>
    <property type="project" value="UniProtKB-EC"/>
</dbReference>
<dbReference type="GO" id="GO:0042773">
    <property type="term" value="P:ATP synthesis coupled electron transport"/>
    <property type="evidence" value="ECO:0007669"/>
    <property type="project" value="TreeGrafter"/>
</dbReference>
<dbReference type="CDD" id="cd13912">
    <property type="entry name" value="CcO_II_C"/>
    <property type="match status" value="1"/>
</dbReference>
<dbReference type="FunFam" id="1.10.287.90:FF:000001">
    <property type="entry name" value="Cytochrome c oxidase subunit 2"/>
    <property type="match status" value="1"/>
</dbReference>
<dbReference type="FunFam" id="2.60.40.420:FF:000001">
    <property type="entry name" value="Cytochrome c oxidase subunit 2"/>
    <property type="match status" value="1"/>
</dbReference>
<dbReference type="Gene3D" id="1.10.287.90">
    <property type="match status" value="1"/>
</dbReference>
<dbReference type="Gene3D" id="2.60.40.420">
    <property type="entry name" value="Cupredoxins - blue copper proteins"/>
    <property type="match status" value="1"/>
</dbReference>
<dbReference type="InterPro" id="IPR045187">
    <property type="entry name" value="CcO_II"/>
</dbReference>
<dbReference type="InterPro" id="IPR002429">
    <property type="entry name" value="CcO_II-like_C"/>
</dbReference>
<dbReference type="InterPro" id="IPR034210">
    <property type="entry name" value="CcO_II_C"/>
</dbReference>
<dbReference type="InterPro" id="IPR001505">
    <property type="entry name" value="Copper_CuA"/>
</dbReference>
<dbReference type="InterPro" id="IPR008972">
    <property type="entry name" value="Cupredoxin"/>
</dbReference>
<dbReference type="InterPro" id="IPR014222">
    <property type="entry name" value="Cyt_c_oxidase_su2"/>
</dbReference>
<dbReference type="InterPro" id="IPR011759">
    <property type="entry name" value="Cyt_c_oxidase_su2_TM_dom"/>
</dbReference>
<dbReference type="InterPro" id="IPR036257">
    <property type="entry name" value="Cyt_c_oxidase_su2_TM_sf"/>
</dbReference>
<dbReference type="NCBIfam" id="TIGR02866">
    <property type="entry name" value="CoxB"/>
    <property type="match status" value="1"/>
</dbReference>
<dbReference type="PANTHER" id="PTHR22888:SF9">
    <property type="entry name" value="CYTOCHROME C OXIDASE SUBUNIT 2"/>
    <property type="match status" value="1"/>
</dbReference>
<dbReference type="PANTHER" id="PTHR22888">
    <property type="entry name" value="CYTOCHROME C OXIDASE, SUBUNIT II"/>
    <property type="match status" value="1"/>
</dbReference>
<dbReference type="Pfam" id="PF00116">
    <property type="entry name" value="COX2"/>
    <property type="match status" value="1"/>
</dbReference>
<dbReference type="Pfam" id="PF02790">
    <property type="entry name" value="COX2_TM"/>
    <property type="match status" value="1"/>
</dbReference>
<dbReference type="PRINTS" id="PR01166">
    <property type="entry name" value="CYCOXIDASEII"/>
</dbReference>
<dbReference type="SUPFAM" id="SSF49503">
    <property type="entry name" value="Cupredoxins"/>
    <property type="match status" value="1"/>
</dbReference>
<dbReference type="SUPFAM" id="SSF81464">
    <property type="entry name" value="Cytochrome c oxidase subunit II-like, transmembrane region"/>
    <property type="match status" value="1"/>
</dbReference>
<dbReference type="PROSITE" id="PS00078">
    <property type="entry name" value="COX2"/>
    <property type="match status" value="1"/>
</dbReference>
<dbReference type="PROSITE" id="PS50857">
    <property type="entry name" value="COX2_CUA"/>
    <property type="match status" value="1"/>
</dbReference>
<dbReference type="PROSITE" id="PS50999">
    <property type="entry name" value="COX2_TM"/>
    <property type="match status" value="1"/>
</dbReference>
<proteinExistence type="inferred from homology"/>
<evidence type="ECO:0000250" key="1">
    <source>
        <dbReference type="UniProtKB" id="P00403"/>
    </source>
</evidence>
<evidence type="ECO:0000250" key="2">
    <source>
        <dbReference type="UniProtKB" id="P00406"/>
    </source>
</evidence>
<evidence type="ECO:0000250" key="3">
    <source>
        <dbReference type="UniProtKB" id="P00410"/>
    </source>
</evidence>
<evidence type="ECO:0000250" key="4">
    <source>
        <dbReference type="UniProtKB" id="P68530"/>
    </source>
</evidence>
<evidence type="ECO:0000305" key="5"/>
<accession>Q38S11</accession>
<name>COX2_HYBUN</name>
<comment type="function">
    <text evidence="3">Component of the cytochrome c oxidase, the last enzyme in the mitochondrial electron transport chain which drives oxidative phosphorylation. The respiratory chain contains 3 multisubunit complexes succinate dehydrogenase (complex II, CII), ubiquinol-cytochrome c oxidoreductase (cytochrome b-c1 complex, complex III, CIII) and cytochrome c oxidase (complex IV, CIV), that cooperate to transfer electrons derived from NADH and succinate to molecular oxygen, creating an electrochemical gradient over the inner membrane that drives transmembrane transport and the ATP synthase. Cytochrome c oxidase is the component of the respiratory chain that catalyzes the reduction of oxygen to water. Electrons originating from reduced cytochrome c in the intermembrane space (IMS) are transferred via the dinuclear copper A center (CU(A)) of subunit 2 and heme A of subunit 1 to the active site in subunit 1, a binuclear center (BNC) formed by heme A3 and copper B (CU(B)). The BNC reduces molecular oxygen to 2 water molecules using 4 electrons from cytochrome c in the IMS and 4 protons from the mitochondrial matrix.</text>
</comment>
<comment type="catalytic activity">
    <reaction evidence="3">
        <text>4 Fe(II)-[cytochrome c] + O2 + 8 H(+)(in) = 4 Fe(III)-[cytochrome c] + 2 H2O + 4 H(+)(out)</text>
        <dbReference type="Rhea" id="RHEA:11436"/>
        <dbReference type="Rhea" id="RHEA-COMP:10350"/>
        <dbReference type="Rhea" id="RHEA-COMP:14399"/>
        <dbReference type="ChEBI" id="CHEBI:15377"/>
        <dbReference type="ChEBI" id="CHEBI:15378"/>
        <dbReference type="ChEBI" id="CHEBI:15379"/>
        <dbReference type="ChEBI" id="CHEBI:29033"/>
        <dbReference type="ChEBI" id="CHEBI:29034"/>
        <dbReference type="EC" id="7.1.1.9"/>
    </reaction>
    <physiologicalReaction direction="left-to-right" evidence="3">
        <dbReference type="Rhea" id="RHEA:11437"/>
    </physiologicalReaction>
</comment>
<comment type="cofactor">
    <cofactor evidence="4">
        <name>Cu cation</name>
        <dbReference type="ChEBI" id="CHEBI:23378"/>
    </cofactor>
    <text evidence="4">Binds a dinuclear copper A center per subunit.</text>
</comment>
<comment type="subunit">
    <text evidence="1 4">Component of the cytochrome c oxidase (complex IV, CIV), a multisubunit enzyme composed of 14 subunits. The complex is composed of a catalytic core of 3 subunits MT-CO1, MT-CO2 and MT-CO3, encoded in the mitochondrial DNA, and 11 supernumerary subunits COX4I, COX5A, COX5B, COX6A, COX6B, COX6C, COX7A, COX7B, COX7C, COX8 and NDUFA4, which are encoded in the nuclear genome. The complex exists as a monomer or a dimer and forms supercomplexes (SCs) in the inner mitochondrial membrane with NADH-ubiquinone oxidoreductase (complex I, CI) and ubiquinol-cytochrome c oxidoreductase (cytochrome b-c1 complex, complex III, CIII), resulting in different assemblies (supercomplex SCI(1)III(2)IV(1) and megacomplex MCI(2)III(2)IV(2)) (By similarity). Found in a complex with TMEM177, COA6, COX18, COX20, SCO1 and SCO2. Interacts with TMEM177 in a COX20-dependent manner. Interacts with COX20. Interacts with COX16 (By similarity).</text>
</comment>
<comment type="subcellular location">
    <subcellularLocation>
        <location evidence="4">Mitochondrion inner membrane</location>
        <topology evidence="4">Multi-pass membrane protein</topology>
    </subcellularLocation>
</comment>
<comment type="similarity">
    <text evidence="5">Belongs to the cytochrome c oxidase subunit 2 family.</text>
</comment>
<feature type="chain" id="PRO_0000254923" description="Cytochrome c oxidase subunit 2">
    <location>
        <begin position="1"/>
        <end position="227"/>
    </location>
</feature>
<feature type="topological domain" description="Mitochondrial intermembrane" evidence="4">
    <location>
        <begin position="1"/>
        <end position="14"/>
    </location>
</feature>
<feature type="transmembrane region" description="Helical; Name=I" evidence="4">
    <location>
        <begin position="15"/>
        <end position="45"/>
    </location>
</feature>
<feature type="topological domain" description="Mitochondrial matrix" evidence="4">
    <location>
        <begin position="46"/>
        <end position="59"/>
    </location>
</feature>
<feature type="transmembrane region" description="Helical; Name=II" evidence="4">
    <location>
        <begin position="60"/>
        <end position="87"/>
    </location>
</feature>
<feature type="topological domain" description="Mitochondrial intermembrane" evidence="4">
    <location>
        <begin position="88"/>
        <end position="227"/>
    </location>
</feature>
<feature type="binding site" evidence="4">
    <location>
        <position position="161"/>
    </location>
    <ligand>
        <name>Cu cation</name>
        <dbReference type="ChEBI" id="CHEBI:23378"/>
        <label>A1</label>
    </ligand>
</feature>
<feature type="binding site" evidence="4">
    <location>
        <position position="196"/>
    </location>
    <ligand>
        <name>Cu cation</name>
        <dbReference type="ChEBI" id="CHEBI:23378"/>
        <label>A1</label>
    </ligand>
</feature>
<feature type="binding site" evidence="4">
    <location>
        <position position="196"/>
    </location>
    <ligand>
        <name>Cu cation</name>
        <dbReference type="ChEBI" id="CHEBI:23378"/>
        <label>A2</label>
    </ligand>
</feature>
<feature type="binding site" evidence="4">
    <location>
        <position position="198"/>
    </location>
    <ligand>
        <name>Cu cation</name>
        <dbReference type="ChEBI" id="CHEBI:23378"/>
        <label>A2</label>
    </ligand>
</feature>
<feature type="binding site" evidence="4">
    <location>
        <position position="198"/>
    </location>
    <ligand>
        <name>Mg(2+)</name>
        <dbReference type="ChEBI" id="CHEBI:18420"/>
        <note>ligand shared with MT-CO1</note>
    </ligand>
</feature>
<feature type="binding site" evidence="4">
    <location>
        <position position="200"/>
    </location>
    <ligand>
        <name>Cu cation</name>
        <dbReference type="ChEBI" id="CHEBI:23378"/>
        <label>A1</label>
    </ligand>
</feature>
<feature type="binding site" evidence="4">
    <location>
        <position position="200"/>
    </location>
    <ligand>
        <name>Cu cation</name>
        <dbReference type="ChEBI" id="CHEBI:23378"/>
        <label>A2</label>
    </ligand>
</feature>
<feature type="binding site" evidence="4">
    <location>
        <position position="204"/>
    </location>
    <ligand>
        <name>Cu cation</name>
        <dbReference type="ChEBI" id="CHEBI:23378"/>
        <label>A2</label>
    </ligand>
</feature>
<feature type="binding site" evidence="4">
    <location>
        <position position="207"/>
    </location>
    <ligand>
        <name>Cu cation</name>
        <dbReference type="ChEBI" id="CHEBI:23378"/>
        <label>A1</label>
    </ligand>
</feature>
<feature type="modified residue" description="Phosphotyrosine" evidence="2">
    <location>
        <position position="218"/>
    </location>
</feature>
<geneLocation type="mitochondrion"/>